<organism>
    <name type="scientific">Cycas necrotic stunt virus</name>
    <name type="common">CNSV</name>
    <dbReference type="NCBI Taxonomy" id="173976"/>
    <lineage>
        <taxon>Viruses</taxon>
        <taxon>Riboviria</taxon>
        <taxon>Orthornavirae</taxon>
        <taxon>Pisuviricota</taxon>
        <taxon>Pisoniviricetes</taxon>
        <taxon>Picornavirales</taxon>
        <taxon>Secoviridae</taxon>
        <taxon>Comovirinae</taxon>
        <taxon>Nepovirus</taxon>
        <taxon>Nepovirus cycas</taxon>
    </lineage>
</organism>
<protein>
    <recommendedName>
        <fullName>RNA1 polyprotein</fullName>
    </recommendedName>
    <alternativeName>
        <fullName>P1</fullName>
    </alternativeName>
    <component>
        <recommendedName>
            <fullName>P1A protein</fullName>
            <shortName>1A</shortName>
        </recommendedName>
        <alternativeName>
            <fullName>Protease cofactor</fullName>
        </alternativeName>
    </component>
    <component>
        <recommendedName>
            <fullName>Putative ATP-dependent helicase</fullName>
            <ecNumber>3.6.4.-</ecNumber>
        </recommendedName>
        <alternativeName>
            <fullName>1B</fullName>
        </alternativeName>
        <alternativeName>
            <fullName>Membrane-binding protein</fullName>
        </alternativeName>
        <alternativeName>
            <fullName>NTP-binding protein</fullName>
            <shortName>NTB</shortName>
        </alternativeName>
    </component>
    <component>
        <recommendedName>
            <fullName>Viral genome-linked protein</fullName>
        </recommendedName>
        <alternativeName>
            <fullName>1C-VPg</fullName>
        </alternativeName>
    </component>
    <component>
        <recommendedName>
            <fullName>Picornain 3C-like protease</fullName>
            <shortName>3C-like protease</shortName>
            <ecNumber>3.4.22.-</ecNumber>
        </recommendedName>
        <alternativeName>
            <fullName>1D-PRO</fullName>
        </alternativeName>
    </component>
    <component>
        <recommendedName>
            <fullName>RNA-directed RNA polymerase</fullName>
            <ecNumber>2.7.7.48</ecNumber>
        </recommendedName>
        <alternativeName>
            <fullName>1E-POL</fullName>
        </alternativeName>
    </component>
</protein>
<dbReference type="EC" id="3.6.4.-"/>
<dbReference type="EC" id="3.4.22.-"/>
<dbReference type="EC" id="2.7.7.48"/>
<dbReference type="EMBL" id="AB073147">
    <property type="protein sequence ID" value="BAB89369.1"/>
    <property type="molecule type" value="Genomic_RNA"/>
</dbReference>
<dbReference type="RefSeq" id="NP_620619.1">
    <property type="nucleotide sequence ID" value="NC_003791.1"/>
</dbReference>
<dbReference type="SMR" id="Q8QVV0"/>
<dbReference type="MEROPS" id="C03.025"/>
<dbReference type="GeneID" id="988023"/>
<dbReference type="KEGG" id="vg:988023"/>
<dbReference type="Proteomes" id="UP000008564">
    <property type="component" value="Genome"/>
</dbReference>
<dbReference type="GO" id="GO:0044166">
    <property type="term" value="C:host cell endoplasmic reticulum lumen"/>
    <property type="evidence" value="ECO:0007669"/>
    <property type="project" value="UniProtKB-SubCell"/>
</dbReference>
<dbReference type="GO" id="GO:0044167">
    <property type="term" value="C:host cell endoplasmic reticulum membrane"/>
    <property type="evidence" value="ECO:0007669"/>
    <property type="project" value="UniProtKB-SubCell"/>
</dbReference>
<dbReference type="GO" id="GO:0016020">
    <property type="term" value="C:membrane"/>
    <property type="evidence" value="ECO:0007669"/>
    <property type="project" value="UniProtKB-KW"/>
</dbReference>
<dbReference type="GO" id="GO:0005524">
    <property type="term" value="F:ATP binding"/>
    <property type="evidence" value="ECO:0007669"/>
    <property type="project" value="UniProtKB-KW"/>
</dbReference>
<dbReference type="GO" id="GO:0004197">
    <property type="term" value="F:cysteine-type endopeptidase activity"/>
    <property type="evidence" value="ECO:0007669"/>
    <property type="project" value="InterPro"/>
</dbReference>
<dbReference type="GO" id="GO:0003723">
    <property type="term" value="F:RNA binding"/>
    <property type="evidence" value="ECO:0007669"/>
    <property type="project" value="UniProtKB-KW"/>
</dbReference>
<dbReference type="GO" id="GO:0003724">
    <property type="term" value="F:RNA helicase activity"/>
    <property type="evidence" value="ECO:0007669"/>
    <property type="project" value="InterPro"/>
</dbReference>
<dbReference type="GO" id="GO:0003968">
    <property type="term" value="F:RNA-directed RNA polymerase activity"/>
    <property type="evidence" value="ECO:0007669"/>
    <property type="project" value="UniProtKB-KW"/>
</dbReference>
<dbReference type="GO" id="GO:0006351">
    <property type="term" value="P:DNA-templated transcription"/>
    <property type="evidence" value="ECO:0007669"/>
    <property type="project" value="InterPro"/>
</dbReference>
<dbReference type="GO" id="GO:0006508">
    <property type="term" value="P:proteolysis"/>
    <property type="evidence" value="ECO:0007669"/>
    <property type="project" value="UniProtKB-KW"/>
</dbReference>
<dbReference type="GO" id="GO:0039694">
    <property type="term" value="P:viral RNA genome replication"/>
    <property type="evidence" value="ECO:0007669"/>
    <property type="project" value="InterPro"/>
</dbReference>
<dbReference type="Gene3D" id="1.20.960.20">
    <property type="match status" value="1"/>
</dbReference>
<dbReference type="Gene3D" id="3.30.70.270">
    <property type="match status" value="1"/>
</dbReference>
<dbReference type="InterPro" id="IPR043502">
    <property type="entry name" value="DNA/RNA_pol_sf"/>
</dbReference>
<dbReference type="InterPro" id="IPR000605">
    <property type="entry name" value="Helicase_SF3_ssDNA/RNA_vir"/>
</dbReference>
<dbReference type="InterPro" id="IPR014759">
    <property type="entry name" value="Helicase_SF3_ssRNA_vir"/>
</dbReference>
<dbReference type="InterPro" id="IPR044067">
    <property type="entry name" value="PCV_3C_PRO"/>
</dbReference>
<dbReference type="InterPro" id="IPR043128">
    <property type="entry name" value="Rev_trsase/Diguanyl_cyclase"/>
</dbReference>
<dbReference type="InterPro" id="IPR001205">
    <property type="entry name" value="RNA-dir_pol_C"/>
</dbReference>
<dbReference type="InterPro" id="IPR007094">
    <property type="entry name" value="RNA-dir_pol_PSvirus"/>
</dbReference>
<dbReference type="Pfam" id="PF00680">
    <property type="entry name" value="RdRP_1"/>
    <property type="match status" value="1"/>
</dbReference>
<dbReference type="Pfam" id="PF00910">
    <property type="entry name" value="RNA_helicase"/>
    <property type="match status" value="1"/>
</dbReference>
<dbReference type="SUPFAM" id="SSF56672">
    <property type="entry name" value="DNA/RNA polymerases"/>
    <property type="match status" value="1"/>
</dbReference>
<dbReference type="PROSITE" id="PS51874">
    <property type="entry name" value="PCV_3C_PRO"/>
    <property type="match status" value="1"/>
</dbReference>
<dbReference type="PROSITE" id="PS50507">
    <property type="entry name" value="RDRP_SSRNA_POS"/>
    <property type="match status" value="1"/>
</dbReference>
<dbReference type="PROSITE" id="PS51218">
    <property type="entry name" value="SF3_HELICASE_2"/>
    <property type="match status" value="1"/>
</dbReference>
<comment type="function">
    <text evidence="1">Picornain 3C-like protease is a thiol protease that cleaves the P1 and P2 polyproteins.</text>
</comment>
<comment type="catalytic activity">
    <reaction evidence="3">
        <text>RNA(n) + a ribonucleoside 5'-triphosphate = RNA(n+1) + diphosphate</text>
        <dbReference type="Rhea" id="RHEA:21248"/>
        <dbReference type="Rhea" id="RHEA-COMP:14527"/>
        <dbReference type="Rhea" id="RHEA-COMP:17342"/>
        <dbReference type="ChEBI" id="CHEBI:33019"/>
        <dbReference type="ChEBI" id="CHEBI:61557"/>
        <dbReference type="ChEBI" id="CHEBI:140395"/>
        <dbReference type="EC" id="2.7.7.48"/>
    </reaction>
</comment>
<comment type="subcellular location">
    <molecule>Viral genome-linked protein</molecule>
    <subcellularLocation>
        <location evidence="1">Host endoplasmic reticulum lumen</location>
    </subcellularLocation>
</comment>
<comment type="subcellular location">
    <molecule>Putative ATP-dependent helicase</molecule>
    <subcellularLocation>
        <location evidence="1">Host endoplasmic reticulum membrane</location>
        <topology evidence="1">Single-pass membrane protein</topology>
    </subcellularLocation>
</comment>
<comment type="PTM">
    <text evidence="1">Specific enzymatic cleavages by picornain 3C-like protease in vivo yield mature proteins. Picornain 3C-like protease is autocatalytically processed (By similarity).</text>
</comment>
<comment type="PTM">
    <text evidence="1">VPg is uridylylated by the polymerase and is covalently linked to the 5'-end of genomic RNA. This uridylylated form acts as a nucleotide-peptide primer for the polymerase (By similarity).</text>
</comment>
<comment type="similarity">
    <text evidence="6">Belongs to the nepoviruses RNA1 polyprotein family.</text>
</comment>
<organismHost>
    <name type="scientific">Aucuba japonica</name>
    <name type="common">Japanese laurel</name>
    <name type="synonym">Spotted laurel</name>
    <dbReference type="NCBI Taxonomy" id="16901"/>
</organismHost>
<organismHost>
    <name type="scientific">Cycas revoluta</name>
    <name type="common">Sago palm</name>
    <dbReference type="NCBI Taxonomy" id="3396"/>
</organismHost>
<organismHost>
    <name type="scientific">Gladiolus</name>
    <dbReference type="NCBI Taxonomy" id="49747"/>
</organismHost>
<reference key="1">
    <citation type="journal article" date="2002" name="Arch. Virol.">
        <title>Nucleotide sequence and taxonomy of Cycas necrotic stunt virus.</title>
        <authorList>
            <person name="Han S.S."/>
            <person name="Karasev A.V."/>
            <person name="Ieki H."/>
            <person name="Iwanami T."/>
        </authorList>
    </citation>
    <scope>NUCLEOTIDE SEQUENCE [GENOMIC RNA]</scope>
</reference>
<accession>Q8QVV0</accession>
<evidence type="ECO:0000250" key="1"/>
<evidence type="ECO:0000255" key="2"/>
<evidence type="ECO:0000255" key="3">
    <source>
        <dbReference type="PROSITE-ProRule" id="PRU00539"/>
    </source>
</evidence>
<evidence type="ECO:0000255" key="4">
    <source>
        <dbReference type="PROSITE-ProRule" id="PRU00551"/>
    </source>
</evidence>
<evidence type="ECO:0000255" key="5">
    <source>
        <dbReference type="PROSITE-ProRule" id="PRU01222"/>
    </source>
</evidence>
<evidence type="ECO:0000305" key="6"/>
<sequence length="2336" mass="261655">MGWICPNVSCLGHTSVLSNKEISREGRCERAMCGSLLVKVAVPQQPAKKKKQATPAPRPTYPPCVVEKTAATPVTVEKVFVEVIPTVPSCLAPKWMLGIQRVEGAPSKAPKQAVPKWVWQMRQLLKAALTGANSFGPRYVRAHFSRARISWIYAQLCEGCPLPLWNRGRALKKSSLALLARIEDTKQQKRAAWEKKEAAPLKSKREYEQKRALLIPLIEKLRARLLQDEARELREQLFPSGNGGTDTTKVAAASKAEIKAAAQLKAYQDVCAKVWRVKRQEKKAQQAKLVEDLITSANCGKQDVSEPAIEKAARPKRRIEIGDFVPQKTLWGLYPCVGLGANMADPVCRVLSACVSIAGKRPDLVSTIYAFITGEAQVWLSAPRVCMLAKRIIELSDWYPHELLAEELKKISDEENCKEAEREINLKYLEISKATENMRANGLFNKLKGKAQDLWSGIVDFASHPFRKYLATAAEFVEGFSHRVVDAVMSRVNAAIAQFAAQLDIAKTLVDQLVIHVKRWYTSLCTSFDDSLKLLGKWAGYALGLIVGVGVCHLVEVICAHMGLPLGGVITGVFTTAYMGWLFVKTPVGSELVMNLRMQVARIARNIFDVQRTGIPPDLPANPNVGFSVPYEAFGGIDNQPFSMGADVPNARAIPVVSPIINAMAGFGASMLSMKAMGLIEMGKLGAACHSLRMGKDALCEFVSTVLYYFGRLADKVTGRETEFFDELSILVQIDVKDWITRSRGVLLDSCYTSLNNMICSDVVNKLVTDGEQIASNIAGTPRRLSLDFGQLVSSIMKDLLDLQQRIVRHGVTVGRRKEPTWIYIFGPSHCGKSNMMDHLTSEVCRYFDLPYTYIARNGQDNFFTTGYKRQTVLQIDDLSCVENVPPIERELINLVSCSEYPLKMADLSDKSISFQSPFIISTSNQRTCLPTCGITHCEAFNNRRAVVVEMRRKPGVVFDPMDCHAAMQGRFLDKRDHTPLFGVQGQPETFWKDVPEMTTILLNICVAHRQEQDILQEQHIRKHAVNDPLILASERFLKQESRKALCYMPRVEMEICGVQSQAAGCYYLCVDQKLYTCEDDGNLVETPCLNPSYAQWERNSSENFVGGVQALDALECRSILVSGILRNLVQGQCCVLSIDEMSRLPLCTQRLFKALQLQERVYLRLIQKKISHILSVDESNVYSKNAWMRCLEFAAASRDYLKEHGLEVLLLLAAMMILCVALYYFVGAFIGVMGGALSMGAAMAGLKEVDMKAQYSSGAQEGRYRSRNIPIRQRYRYARGELDEEVPLGGQLAVALYGSQGRFISALQYKGKSVMLTRHQMLMFAEKERVTCIYLATGESVVLTFNRDDVQEFPNHETCMWQAAGMLQLPAKFKDCFLEKGETELAPAFELEGYVLRPDSTAFIMTILKTWARVQYEPFVVRGSLAKEKYVNELPTSIWFQYQSRNNDCGMVCLAQVGGKKKIVGLLVAGVDQQTWADNLPNPCMAEMKSQIEYEFKLGAHTEGYTKLGYLTKDKTPHLPKKNNAVLVKPEYRIDSPVPIKEPSIISAEDPRCPKDAEGKPIDPIVKAFEKKFTTPMDLLEDDILESIAQEMVDEWQDCESEPLCDVPLEVAINGIPGTQIDDDDEFEDAVECLKMRTSPGYPYVLHKEPGMKGKEAYFELAPDGTRALKEGSLAAELYENIVQYSKSAIPELVVIECPKDELLKTEKVNKACRPFEIMPLHYNLFLREKTLAFSLFQQRNRHKLACQVGTKAYSHDWTHMYQRLVAKSDRAINCDYSSFDGLLNSQVVSCIANMINSMYHSPEETVVSKRQRYNMINALFGRLAITGQEVMRVRAGLPSGFALTVVINSVFNEILMRYCFKVLVLGPQRNSFSTYVTLLVYGDDNLMSCTDKIAIYFNGETIKETLKKKNVTITDGSDKTAPDIKWKTLGELDFLKRRFLKLETGVVQAPLDLTAIFSCLHWVTPHPQKMPKGGAQLQVENVDTLYELALNVQVALTELYLHGNKEEFQRVRNFYTKKMNILPAGYYTWADREAFHMSKQTGMEAYQPAKEIDLDVGQEFARFMHTSDIGNQVHFTRQCLVVAGPFYKPTPDQLLVSTTPLKQGESGYWVPVETGMGIGNLPTIAWVHRFMRPTQLVDAYGYKIWGNVRSHIESGKSLVFRSEAPYVAGNAALMAFGQAAKLLEIKTALNLYRNVIPESTYGLEQYFDAAIPQASLPGTFYLANAESESLLQEHKTGTVIGLTTEKFNLNGARDLIMQGQKLGKLPVMAATQAPNKFYVGLCCQKNFCPGHATSSDSIAKAFSQCWAMRCAPNSSSRKVTFEPEWRKNKFLGIS</sequence>
<feature type="chain" id="PRO_0000037065" description="P1A protein" evidence="2">
    <location>
        <begin position="1"/>
        <end position="598"/>
    </location>
</feature>
<feature type="chain" id="PRO_0000037066" description="Putative ATP-dependent helicase" evidence="2">
    <location>
        <begin position="599"/>
        <end position="1253"/>
    </location>
</feature>
<feature type="chain" id="PRO_0000037067" description="Viral genome-linked protein" evidence="1">
    <location>
        <begin position="1254"/>
        <end position="1280"/>
    </location>
</feature>
<feature type="chain" id="PRO_0000037068" description="Picornain 3C-like protease" evidence="2">
    <location>
        <begin position="1281"/>
        <end position="1490"/>
    </location>
</feature>
<feature type="chain" id="PRO_0000037069" description="RNA-directed RNA polymerase" evidence="2">
    <location>
        <begin position="1491"/>
        <end position="2336"/>
    </location>
</feature>
<feature type="topological domain" description="Cytoplasmic" evidence="2">
    <location>
        <begin position="599"/>
        <end position="1210"/>
    </location>
</feature>
<feature type="transmembrane region" description="Helical" evidence="2">
    <location>
        <begin position="1211"/>
        <end position="1231"/>
    </location>
</feature>
<feature type="topological domain" description="Lumenal" evidence="2">
    <location>
        <begin position="1232"/>
        <end position="1253"/>
    </location>
</feature>
<feature type="domain" description="SF3 helicase" evidence="4">
    <location>
        <begin position="797"/>
        <end position="964"/>
    </location>
</feature>
<feature type="domain" description="Peptidase C3" evidence="5">
    <location>
        <begin position="1278"/>
        <end position="1486"/>
    </location>
</feature>
<feature type="domain" description="RdRp catalytic" evidence="3">
    <location>
        <begin position="1771"/>
        <end position="1899"/>
    </location>
</feature>
<feature type="active site" description="For picornain 3C-like protease activity" evidence="5">
    <location>
        <position position="1320"/>
    </location>
</feature>
<feature type="active site" description="For picornain 3C-like protease activity" evidence="5">
    <location>
        <position position="1358"/>
    </location>
</feature>
<feature type="active site" description="For picornain 3C-like protease activity" evidence="5">
    <location>
        <position position="1450"/>
    </location>
</feature>
<feature type="binding site" evidence="4">
    <location>
        <begin position="827"/>
        <end position="834"/>
    </location>
    <ligand>
        <name>ATP</name>
        <dbReference type="ChEBI" id="CHEBI:30616"/>
    </ligand>
</feature>
<keyword id="KW-0067">ATP-binding</keyword>
<keyword id="KW-0191">Covalent protein-RNA linkage</keyword>
<keyword id="KW-0347">Helicase</keyword>
<keyword id="KW-1038">Host endoplasmic reticulum</keyword>
<keyword id="KW-1043">Host membrane</keyword>
<keyword id="KW-0378">Hydrolase</keyword>
<keyword id="KW-0472">Membrane</keyword>
<keyword id="KW-0547">Nucleotide-binding</keyword>
<keyword id="KW-0548">Nucleotidyltransferase</keyword>
<keyword id="KW-0645">Protease</keyword>
<keyword id="KW-0694">RNA-binding</keyword>
<keyword id="KW-0696">RNA-directed RNA polymerase</keyword>
<keyword id="KW-0788">Thiol protease</keyword>
<keyword id="KW-0808">Transferase</keyword>
<keyword id="KW-0812">Transmembrane</keyword>
<keyword id="KW-1133">Transmembrane helix</keyword>
<keyword id="KW-0693">Viral RNA replication</keyword>
<proteinExistence type="inferred from homology"/>
<name>POL1_CNSV</name>